<gene>
    <name type="ordered locus">GK2737</name>
</gene>
<evidence type="ECO:0000255" key="1">
    <source>
        <dbReference type="HAMAP-Rule" id="MF_01874"/>
    </source>
</evidence>
<organism>
    <name type="scientific">Geobacillus kaustophilus (strain HTA426)</name>
    <dbReference type="NCBI Taxonomy" id="235909"/>
    <lineage>
        <taxon>Bacteria</taxon>
        <taxon>Bacillati</taxon>
        <taxon>Bacillota</taxon>
        <taxon>Bacilli</taxon>
        <taxon>Bacillales</taxon>
        <taxon>Anoxybacillaceae</taxon>
        <taxon>Geobacillus</taxon>
        <taxon>Geobacillus thermoleovorans group</taxon>
    </lineage>
</organism>
<accession>Q5KWB4</accession>
<sequence length="151" mass="15715">MNEPVLFLLLLLALGFLAKNKSLIVAIVVLLAIKLVGLDQKVLPIIQSKGINWGVTVITIAVLAPIASGEIGFRQLVGSLQSLSAWVALASGIFVALIAKNGVTLLANDPHMTAALAFGTILAVSLFHGVAVGPLIGAGIAYTVIKMVEYF</sequence>
<dbReference type="EMBL" id="BA000043">
    <property type="protein sequence ID" value="BAD77022.1"/>
    <property type="molecule type" value="Genomic_DNA"/>
</dbReference>
<dbReference type="RefSeq" id="WP_011232211.1">
    <property type="nucleotide sequence ID" value="NC_006510.1"/>
</dbReference>
<dbReference type="STRING" id="235909.GK2737"/>
<dbReference type="KEGG" id="gka:GK2737"/>
<dbReference type="eggNOG" id="COG2707">
    <property type="taxonomic scope" value="Bacteria"/>
</dbReference>
<dbReference type="HOGENOM" id="CLU_125889_1_0_9"/>
<dbReference type="Proteomes" id="UP000001172">
    <property type="component" value="Chromosome"/>
</dbReference>
<dbReference type="GO" id="GO:0005886">
    <property type="term" value="C:plasma membrane"/>
    <property type="evidence" value="ECO:0007669"/>
    <property type="project" value="UniProtKB-SubCell"/>
</dbReference>
<dbReference type="HAMAP" id="MF_01874">
    <property type="entry name" value="UPF0756"/>
    <property type="match status" value="1"/>
</dbReference>
<dbReference type="InterPro" id="IPR007382">
    <property type="entry name" value="UPF0756_TM"/>
</dbReference>
<dbReference type="PANTHER" id="PTHR38452">
    <property type="entry name" value="UPF0756 MEMBRANE PROTEIN YEAL"/>
    <property type="match status" value="1"/>
</dbReference>
<dbReference type="PANTHER" id="PTHR38452:SF1">
    <property type="entry name" value="UPF0756 MEMBRANE PROTEIN YEAL"/>
    <property type="match status" value="1"/>
</dbReference>
<dbReference type="Pfam" id="PF04284">
    <property type="entry name" value="DUF441"/>
    <property type="match status" value="1"/>
</dbReference>
<feature type="chain" id="PRO_0000388877" description="UPF0756 membrane protein GK2737">
    <location>
        <begin position="1"/>
        <end position="151"/>
    </location>
</feature>
<feature type="transmembrane region" description="Helical" evidence="1">
    <location>
        <begin position="5"/>
        <end position="25"/>
    </location>
</feature>
<feature type="transmembrane region" description="Helical" evidence="1">
    <location>
        <begin position="53"/>
        <end position="73"/>
    </location>
</feature>
<feature type="transmembrane region" description="Helical" evidence="1">
    <location>
        <begin position="79"/>
        <end position="99"/>
    </location>
</feature>
<feature type="transmembrane region" description="Helical" evidence="1">
    <location>
        <begin position="121"/>
        <end position="141"/>
    </location>
</feature>
<comment type="subcellular location">
    <subcellularLocation>
        <location evidence="1">Cell membrane</location>
        <topology evidence="1">Multi-pass membrane protein</topology>
    </subcellularLocation>
</comment>
<comment type="similarity">
    <text evidence="1">Belongs to the UPF0756 family.</text>
</comment>
<reference key="1">
    <citation type="journal article" date="2004" name="Nucleic Acids Res.">
        <title>Thermoadaptation trait revealed by the genome sequence of thermophilic Geobacillus kaustophilus.</title>
        <authorList>
            <person name="Takami H."/>
            <person name="Takaki Y."/>
            <person name="Chee G.-J."/>
            <person name="Nishi S."/>
            <person name="Shimamura S."/>
            <person name="Suzuki H."/>
            <person name="Matsui S."/>
            <person name="Uchiyama I."/>
        </authorList>
    </citation>
    <scope>NUCLEOTIDE SEQUENCE [LARGE SCALE GENOMIC DNA]</scope>
    <source>
        <strain>HTA426</strain>
    </source>
</reference>
<name>Y2737_GEOKA</name>
<protein>
    <recommendedName>
        <fullName evidence="1">UPF0756 membrane protein GK2737</fullName>
    </recommendedName>
</protein>
<keyword id="KW-1003">Cell membrane</keyword>
<keyword id="KW-0472">Membrane</keyword>
<keyword id="KW-1185">Reference proteome</keyword>
<keyword id="KW-0812">Transmembrane</keyword>
<keyword id="KW-1133">Transmembrane helix</keyword>
<proteinExistence type="inferred from homology"/>